<comment type="function">
    <text evidence="1">F(1)F(0) ATP synthase produces ATP from ADP in the presence of a proton or sodium gradient. F-type ATPases consist of two structural domains, F(1) containing the extramembraneous catalytic core and F(0) containing the membrane proton channel, linked together by a central stalk and a peripheral stalk. During catalysis, ATP synthesis in the catalytic domain of F(1) is coupled via a rotary mechanism of the central stalk subunits to proton translocation.</text>
</comment>
<comment type="function">
    <text evidence="1">Component of the F(0) channel, it forms part of the peripheral stalk, linking F(1) to F(0).</text>
</comment>
<comment type="subunit">
    <text evidence="1">F-type ATPases have 2 components, F(1) - the catalytic core - and F(0) - the membrane proton channel. F(1) has five subunits: alpha(3), beta(3), gamma(1), delta(1), epsilon(1). F(0) has three main subunits: a(1), b(2) and c(10-14). The alpha and beta chains form an alternating ring which encloses part of the gamma chain. F(1) is attached to F(0) by a central stalk formed by the gamma and epsilon chains, while a peripheral stalk is formed by the delta and b chains.</text>
</comment>
<comment type="subcellular location">
    <subcellularLocation>
        <location evidence="1">Cell membrane</location>
        <topology evidence="1">Single-pass membrane protein</topology>
    </subcellularLocation>
</comment>
<comment type="similarity">
    <text evidence="1">Belongs to the ATPase B chain family.</text>
</comment>
<keyword id="KW-0066">ATP synthesis</keyword>
<keyword id="KW-1003">Cell membrane</keyword>
<keyword id="KW-0138">CF(0)</keyword>
<keyword id="KW-0375">Hydrogen ion transport</keyword>
<keyword id="KW-0406">Ion transport</keyword>
<keyword id="KW-0472">Membrane</keyword>
<keyword id="KW-1185">Reference proteome</keyword>
<keyword id="KW-0812">Transmembrane</keyword>
<keyword id="KW-1133">Transmembrane helix</keyword>
<keyword id="KW-0813">Transport</keyword>
<evidence type="ECO:0000255" key="1">
    <source>
        <dbReference type="HAMAP-Rule" id="MF_01398"/>
    </source>
</evidence>
<dbReference type="EMBL" id="AE014295">
    <property type="protein sequence ID" value="AAN24199.1"/>
    <property type="molecule type" value="Genomic_DNA"/>
</dbReference>
<dbReference type="RefSeq" id="NP_695563.1">
    <property type="nucleotide sequence ID" value="NC_004307.2"/>
</dbReference>
<dbReference type="SMR" id="Q8G7A9"/>
<dbReference type="STRING" id="206672.BL0361"/>
<dbReference type="EnsemblBacteria" id="AAN24199">
    <property type="protein sequence ID" value="AAN24199"/>
    <property type="gene ID" value="BL0361"/>
</dbReference>
<dbReference type="KEGG" id="blo:BL0361"/>
<dbReference type="PATRIC" id="fig|206672.9.peg.1097"/>
<dbReference type="HOGENOM" id="CLU_079215_5_0_11"/>
<dbReference type="OrthoDB" id="5243563at2"/>
<dbReference type="PhylomeDB" id="Q8G7A9"/>
<dbReference type="Proteomes" id="UP000000439">
    <property type="component" value="Chromosome"/>
</dbReference>
<dbReference type="GO" id="GO:0005886">
    <property type="term" value="C:plasma membrane"/>
    <property type="evidence" value="ECO:0007669"/>
    <property type="project" value="UniProtKB-SubCell"/>
</dbReference>
<dbReference type="GO" id="GO:0045259">
    <property type="term" value="C:proton-transporting ATP synthase complex"/>
    <property type="evidence" value="ECO:0007669"/>
    <property type="project" value="UniProtKB-KW"/>
</dbReference>
<dbReference type="GO" id="GO:0046933">
    <property type="term" value="F:proton-transporting ATP synthase activity, rotational mechanism"/>
    <property type="evidence" value="ECO:0007669"/>
    <property type="project" value="UniProtKB-UniRule"/>
</dbReference>
<dbReference type="GO" id="GO:0046961">
    <property type="term" value="F:proton-transporting ATPase activity, rotational mechanism"/>
    <property type="evidence" value="ECO:0007669"/>
    <property type="project" value="TreeGrafter"/>
</dbReference>
<dbReference type="CDD" id="cd06503">
    <property type="entry name" value="ATP-synt_Fo_b"/>
    <property type="match status" value="1"/>
</dbReference>
<dbReference type="Gene3D" id="1.20.5.620">
    <property type="entry name" value="F1F0 ATP synthase subunit B, membrane domain"/>
    <property type="match status" value="1"/>
</dbReference>
<dbReference type="HAMAP" id="MF_01398">
    <property type="entry name" value="ATP_synth_b_bprime"/>
    <property type="match status" value="1"/>
</dbReference>
<dbReference type="InterPro" id="IPR028987">
    <property type="entry name" value="ATP_synth_B-like_membr_sf"/>
</dbReference>
<dbReference type="InterPro" id="IPR002146">
    <property type="entry name" value="ATP_synth_b/b'su_bac/chlpt"/>
</dbReference>
<dbReference type="InterPro" id="IPR005864">
    <property type="entry name" value="ATP_synth_F0_bsu_bac"/>
</dbReference>
<dbReference type="InterPro" id="IPR050059">
    <property type="entry name" value="ATP_synthase_B_chain"/>
</dbReference>
<dbReference type="NCBIfam" id="TIGR01144">
    <property type="entry name" value="ATP_synt_b"/>
    <property type="match status" value="1"/>
</dbReference>
<dbReference type="NCBIfam" id="NF004412">
    <property type="entry name" value="PRK05759.1-3"/>
    <property type="match status" value="1"/>
</dbReference>
<dbReference type="PANTHER" id="PTHR33445:SF1">
    <property type="entry name" value="ATP SYNTHASE SUBUNIT B"/>
    <property type="match status" value="1"/>
</dbReference>
<dbReference type="PANTHER" id="PTHR33445">
    <property type="entry name" value="ATP SYNTHASE SUBUNIT B', CHLOROPLASTIC"/>
    <property type="match status" value="1"/>
</dbReference>
<dbReference type="Pfam" id="PF00430">
    <property type="entry name" value="ATP-synt_B"/>
    <property type="match status" value="1"/>
</dbReference>
<dbReference type="SUPFAM" id="SSF81573">
    <property type="entry name" value="F1F0 ATP synthase subunit B, membrane domain"/>
    <property type="match status" value="1"/>
</dbReference>
<gene>
    <name evidence="1" type="primary">atpF</name>
    <name type="ordered locus">BL0361</name>
</gene>
<protein>
    <recommendedName>
        <fullName evidence="1">ATP synthase subunit b</fullName>
    </recommendedName>
    <alternativeName>
        <fullName evidence="1">ATP synthase F(0) sector subunit b</fullName>
    </alternativeName>
    <alternativeName>
        <fullName evidence="1">ATPase subunit I</fullName>
    </alternativeName>
    <alternativeName>
        <fullName evidence="1">F-type ATPase subunit b</fullName>
        <shortName evidence="1">F-ATPase subunit b</shortName>
    </alternativeName>
</protein>
<proteinExistence type="inferred from homology"/>
<organism>
    <name type="scientific">Bifidobacterium longum (strain NCC 2705)</name>
    <dbReference type="NCBI Taxonomy" id="206672"/>
    <lineage>
        <taxon>Bacteria</taxon>
        <taxon>Bacillati</taxon>
        <taxon>Actinomycetota</taxon>
        <taxon>Actinomycetes</taxon>
        <taxon>Bifidobacteriales</taxon>
        <taxon>Bifidobacteriaceae</taxon>
        <taxon>Bifidobacterium</taxon>
    </lineage>
</organism>
<accession>Q8G7A9</accession>
<sequence>MMTQAASGIDLFIPEVYDIVWSLIILVIVAVFFYKFFMPKFNAIFDERAAKIQGNIAKAEQARKDADEAKAKYEAQLSTARVDAAKIRDDARAEASHIIADARSRAESDAAQITASAQRSIESQHQQAIVSLKGEVGALATALAGKILGAKLEDNDVQSSMIDSMIDDLGAKK</sequence>
<name>ATPF_BIFLO</name>
<feature type="chain" id="PRO_0000368353" description="ATP synthase subunit b">
    <location>
        <begin position="1"/>
        <end position="173"/>
    </location>
</feature>
<feature type="transmembrane region" description="Helical" evidence="1">
    <location>
        <begin position="19"/>
        <end position="39"/>
    </location>
</feature>
<reference key="1">
    <citation type="journal article" date="2002" name="Proc. Natl. Acad. Sci. U.S.A.">
        <title>The genome sequence of Bifidobacterium longum reflects its adaptation to the human gastrointestinal tract.</title>
        <authorList>
            <person name="Schell M.A."/>
            <person name="Karmirantzou M."/>
            <person name="Snel B."/>
            <person name="Vilanova D."/>
            <person name="Berger B."/>
            <person name="Pessi G."/>
            <person name="Zwahlen M.-C."/>
            <person name="Desiere F."/>
            <person name="Bork P."/>
            <person name="Delley M."/>
            <person name="Pridmore R.D."/>
            <person name="Arigoni F."/>
        </authorList>
    </citation>
    <scope>NUCLEOTIDE SEQUENCE [LARGE SCALE GENOMIC DNA]</scope>
    <source>
        <strain>NCC 2705</strain>
    </source>
</reference>